<protein>
    <recommendedName>
        <fullName>60S ribosomal subunit assembly/export protein loc1</fullName>
    </recommendedName>
</protein>
<dbReference type="EMBL" id="DS027058">
    <property type="protein sequence ID" value="EAW08660.1"/>
    <property type="molecule type" value="Genomic_DNA"/>
</dbReference>
<dbReference type="RefSeq" id="XP_001270086.1">
    <property type="nucleotide sequence ID" value="XM_001270085.1"/>
</dbReference>
<dbReference type="SMR" id="A1CM73"/>
<dbReference type="STRING" id="344612.A1CM73"/>
<dbReference type="EnsemblFungi" id="EAW08660">
    <property type="protein sequence ID" value="EAW08660"/>
    <property type="gene ID" value="ACLA_095930"/>
</dbReference>
<dbReference type="GeneID" id="4702286"/>
<dbReference type="KEGG" id="act:ACLA_095930"/>
<dbReference type="VEuPathDB" id="FungiDB:ACLA_095930"/>
<dbReference type="eggNOG" id="ENOG502RY6R">
    <property type="taxonomic scope" value="Eukaryota"/>
</dbReference>
<dbReference type="HOGENOM" id="CLU_096593_0_0_1"/>
<dbReference type="OMA" id="NAEQEGH"/>
<dbReference type="OrthoDB" id="1743802at2759"/>
<dbReference type="Proteomes" id="UP000006701">
    <property type="component" value="Unassembled WGS sequence"/>
</dbReference>
<dbReference type="GO" id="GO:0005730">
    <property type="term" value="C:nucleolus"/>
    <property type="evidence" value="ECO:0007669"/>
    <property type="project" value="UniProtKB-SubCell"/>
</dbReference>
<dbReference type="GO" id="GO:0030687">
    <property type="term" value="C:preribosome, large subunit precursor"/>
    <property type="evidence" value="ECO:0007669"/>
    <property type="project" value="TreeGrafter"/>
</dbReference>
<dbReference type="GO" id="GO:0003729">
    <property type="term" value="F:mRNA binding"/>
    <property type="evidence" value="ECO:0007669"/>
    <property type="project" value="InterPro"/>
</dbReference>
<dbReference type="GO" id="GO:0008298">
    <property type="term" value="P:intracellular mRNA localization"/>
    <property type="evidence" value="ECO:0007669"/>
    <property type="project" value="TreeGrafter"/>
</dbReference>
<dbReference type="GO" id="GO:0051028">
    <property type="term" value="P:mRNA transport"/>
    <property type="evidence" value="ECO:0007669"/>
    <property type="project" value="UniProtKB-KW"/>
</dbReference>
<dbReference type="GO" id="GO:0042273">
    <property type="term" value="P:ribosomal large subunit biogenesis"/>
    <property type="evidence" value="ECO:0007669"/>
    <property type="project" value="InterPro"/>
</dbReference>
<dbReference type="InterPro" id="IPR037650">
    <property type="entry name" value="Loc1"/>
</dbReference>
<dbReference type="PANTHER" id="PTHR28028">
    <property type="entry name" value="60S RIBOSOMAL SUBUNIT ASSEMBLY/EXPORT PROTEIN LOC1"/>
    <property type="match status" value="1"/>
</dbReference>
<dbReference type="PANTHER" id="PTHR28028:SF1">
    <property type="entry name" value="60S RIBOSOMAL SUBUNIT ASSEMBLY_EXPORT PROTEIN LOC1"/>
    <property type="match status" value="1"/>
</dbReference>
<evidence type="ECO:0000250" key="1"/>
<evidence type="ECO:0000255" key="2"/>
<evidence type="ECO:0000256" key="3">
    <source>
        <dbReference type="SAM" id="MobiDB-lite"/>
    </source>
</evidence>
<evidence type="ECO:0000305" key="4"/>
<accession>A1CM73</accession>
<organism>
    <name type="scientific">Aspergillus clavatus (strain ATCC 1007 / CBS 513.65 / DSM 816 / NCTC 3887 / NRRL 1 / QM 1276 / 107)</name>
    <dbReference type="NCBI Taxonomy" id="344612"/>
    <lineage>
        <taxon>Eukaryota</taxon>
        <taxon>Fungi</taxon>
        <taxon>Dikarya</taxon>
        <taxon>Ascomycota</taxon>
        <taxon>Pezizomycotina</taxon>
        <taxon>Eurotiomycetes</taxon>
        <taxon>Eurotiomycetidae</taxon>
        <taxon>Eurotiales</taxon>
        <taxon>Aspergillaceae</taxon>
        <taxon>Aspergillus</taxon>
        <taxon>Aspergillus subgen. Fumigati</taxon>
    </lineage>
</organism>
<keyword id="KW-0175">Coiled coil</keyword>
<keyword id="KW-0509">mRNA transport</keyword>
<keyword id="KW-0539">Nucleus</keyword>
<keyword id="KW-1185">Reference proteome</keyword>
<keyword id="KW-0690">Ribosome biogenesis</keyword>
<keyword id="KW-0813">Transport</keyword>
<proteinExistence type="inferred from homology"/>
<feature type="chain" id="PRO_0000308784" description="60S ribosomal subunit assembly/export protein loc1">
    <location>
        <begin position="1"/>
        <end position="190"/>
    </location>
</feature>
<feature type="region of interest" description="Disordered" evidence="3">
    <location>
        <begin position="1"/>
        <end position="67"/>
    </location>
</feature>
<feature type="region of interest" description="Disordered" evidence="3">
    <location>
        <begin position="114"/>
        <end position="190"/>
    </location>
</feature>
<feature type="coiled-coil region" evidence="2">
    <location>
        <begin position="115"/>
        <end position="161"/>
    </location>
</feature>
<feature type="compositionally biased region" description="Low complexity" evidence="3">
    <location>
        <begin position="1"/>
        <end position="13"/>
    </location>
</feature>
<feature type="compositionally biased region" description="Basic and acidic residues" evidence="3">
    <location>
        <begin position="39"/>
        <end position="49"/>
    </location>
</feature>
<feature type="compositionally biased region" description="Basic and acidic residues" evidence="3">
    <location>
        <begin position="114"/>
        <end position="154"/>
    </location>
</feature>
<feature type="compositionally biased region" description="Low complexity" evidence="3">
    <location>
        <begin position="164"/>
        <end position="179"/>
    </location>
</feature>
<feature type="compositionally biased region" description="Basic residues" evidence="3">
    <location>
        <begin position="180"/>
        <end position="190"/>
    </location>
</feature>
<comment type="function">
    <text evidence="1">Required for efficient assembly and nuclear export of the 60S ribosomal subunit.</text>
</comment>
<comment type="subunit">
    <text evidence="1">Component of the 66S pre-ribosomal particle.</text>
</comment>
<comment type="subcellular location">
    <subcellularLocation>
        <location evidence="1">Nucleus</location>
        <location evidence="1">Nucleolus</location>
    </subcellularLocation>
</comment>
<comment type="similarity">
    <text evidence="4">Belongs to the LOC1 family.</text>
</comment>
<sequence>MAPNKPSVKGKSSSKGDSKTGKPLSSASKVNKKNVKRPPPKEVKSKARTESSLLKKTKKREYTEEELGLPKLNMITPVGVVKPKGKKKGKVFVDDQEGMMTILAMVNAEQEGHIESKLQKARQMEEIREARRKEAEARLAQKKSKLDDAKESIRQKKKRKGGSSEDSAADTSAAASGAKSKGKRKSVSFA</sequence>
<name>LOC1_ASPCL</name>
<gene>
    <name type="primary">loc1</name>
    <name type="ORF">ACLA_095930</name>
</gene>
<reference key="1">
    <citation type="journal article" date="2008" name="PLoS Genet.">
        <title>Genomic islands in the pathogenic filamentous fungus Aspergillus fumigatus.</title>
        <authorList>
            <person name="Fedorova N.D."/>
            <person name="Khaldi N."/>
            <person name="Joardar V.S."/>
            <person name="Maiti R."/>
            <person name="Amedeo P."/>
            <person name="Anderson M.J."/>
            <person name="Crabtree J."/>
            <person name="Silva J.C."/>
            <person name="Badger J.H."/>
            <person name="Albarraq A."/>
            <person name="Angiuoli S."/>
            <person name="Bussey H."/>
            <person name="Bowyer P."/>
            <person name="Cotty P.J."/>
            <person name="Dyer P.S."/>
            <person name="Egan A."/>
            <person name="Galens K."/>
            <person name="Fraser-Liggett C.M."/>
            <person name="Haas B.J."/>
            <person name="Inman J.M."/>
            <person name="Kent R."/>
            <person name="Lemieux S."/>
            <person name="Malavazi I."/>
            <person name="Orvis J."/>
            <person name="Roemer T."/>
            <person name="Ronning C.M."/>
            <person name="Sundaram J.P."/>
            <person name="Sutton G."/>
            <person name="Turner G."/>
            <person name="Venter J.C."/>
            <person name="White O.R."/>
            <person name="Whitty B.R."/>
            <person name="Youngman P."/>
            <person name="Wolfe K.H."/>
            <person name="Goldman G.H."/>
            <person name="Wortman J.R."/>
            <person name="Jiang B."/>
            <person name="Denning D.W."/>
            <person name="Nierman W.C."/>
        </authorList>
    </citation>
    <scope>NUCLEOTIDE SEQUENCE [LARGE SCALE GENOMIC DNA]</scope>
    <source>
        <strain>ATCC 1007 / CBS 513.65 / DSM 816 / NCTC 3887 / NRRL 1 / QM 1276 / 107</strain>
    </source>
</reference>